<accession>Q6KHY6</accession>
<sequence>MFAIIETGGKQILVKKDDFIFIEKIEGEAGQNVVFDKVLLVDDKIGTPFLKNATVTGIIEKQGKQKKIVVYRHNAKSTHKRKLGHRQPYTRVKILEIKG</sequence>
<comment type="function">
    <text evidence="1">This protein binds to 23S rRNA in the presence of protein L20.</text>
</comment>
<comment type="subunit">
    <text evidence="1">Part of the 50S ribosomal subunit. Contacts protein L20.</text>
</comment>
<comment type="similarity">
    <text evidence="1">Belongs to the bacterial ribosomal protein bL21 family.</text>
</comment>
<keyword id="KW-1185">Reference proteome</keyword>
<keyword id="KW-0687">Ribonucleoprotein</keyword>
<keyword id="KW-0689">Ribosomal protein</keyword>
<keyword id="KW-0694">RNA-binding</keyword>
<keyword id="KW-0699">rRNA-binding</keyword>
<proteinExistence type="inferred from homology"/>
<name>RL21_MYCM1</name>
<protein>
    <recommendedName>
        <fullName evidence="1">Large ribosomal subunit protein bL21</fullName>
    </recommendedName>
    <alternativeName>
        <fullName evidence="2">50S ribosomal protein L21</fullName>
    </alternativeName>
</protein>
<organism>
    <name type="scientific">Mycoplasma mobile (strain ATCC 43663 / 163K / NCTC 11711)</name>
    <name type="common">Mesomycoplasma mobile</name>
    <dbReference type="NCBI Taxonomy" id="267748"/>
    <lineage>
        <taxon>Bacteria</taxon>
        <taxon>Bacillati</taxon>
        <taxon>Mycoplasmatota</taxon>
        <taxon>Mycoplasmoidales</taxon>
        <taxon>Metamycoplasmataceae</taxon>
        <taxon>Mesomycoplasma</taxon>
    </lineage>
</organism>
<gene>
    <name evidence="1" type="primary">rplU</name>
    <name type="ordered locus">MMOB3040</name>
</gene>
<evidence type="ECO:0000255" key="1">
    <source>
        <dbReference type="HAMAP-Rule" id="MF_01363"/>
    </source>
</evidence>
<evidence type="ECO:0000305" key="2"/>
<dbReference type="EMBL" id="AE017308">
    <property type="protein sequence ID" value="AAT27790.1"/>
    <property type="molecule type" value="Genomic_DNA"/>
</dbReference>
<dbReference type="RefSeq" id="WP_011264824.1">
    <property type="nucleotide sequence ID" value="NC_006908.1"/>
</dbReference>
<dbReference type="SMR" id="Q6KHY6"/>
<dbReference type="STRING" id="267748.MMOB3040"/>
<dbReference type="KEGG" id="mmo:MMOB3040"/>
<dbReference type="eggNOG" id="COG0261">
    <property type="taxonomic scope" value="Bacteria"/>
</dbReference>
<dbReference type="HOGENOM" id="CLU_061463_3_1_14"/>
<dbReference type="OrthoDB" id="9813334at2"/>
<dbReference type="Proteomes" id="UP000009072">
    <property type="component" value="Chromosome"/>
</dbReference>
<dbReference type="GO" id="GO:0005737">
    <property type="term" value="C:cytoplasm"/>
    <property type="evidence" value="ECO:0007669"/>
    <property type="project" value="UniProtKB-ARBA"/>
</dbReference>
<dbReference type="GO" id="GO:1990904">
    <property type="term" value="C:ribonucleoprotein complex"/>
    <property type="evidence" value="ECO:0007669"/>
    <property type="project" value="UniProtKB-KW"/>
</dbReference>
<dbReference type="GO" id="GO:0005840">
    <property type="term" value="C:ribosome"/>
    <property type="evidence" value="ECO:0007669"/>
    <property type="project" value="UniProtKB-KW"/>
</dbReference>
<dbReference type="GO" id="GO:0019843">
    <property type="term" value="F:rRNA binding"/>
    <property type="evidence" value="ECO:0007669"/>
    <property type="project" value="UniProtKB-UniRule"/>
</dbReference>
<dbReference type="GO" id="GO:0003735">
    <property type="term" value="F:structural constituent of ribosome"/>
    <property type="evidence" value="ECO:0007669"/>
    <property type="project" value="InterPro"/>
</dbReference>
<dbReference type="GO" id="GO:0006412">
    <property type="term" value="P:translation"/>
    <property type="evidence" value="ECO:0007669"/>
    <property type="project" value="UniProtKB-UniRule"/>
</dbReference>
<dbReference type="HAMAP" id="MF_01363">
    <property type="entry name" value="Ribosomal_bL21"/>
    <property type="match status" value="1"/>
</dbReference>
<dbReference type="InterPro" id="IPR028909">
    <property type="entry name" value="bL21-like"/>
</dbReference>
<dbReference type="InterPro" id="IPR036164">
    <property type="entry name" value="bL21-like_sf"/>
</dbReference>
<dbReference type="InterPro" id="IPR001787">
    <property type="entry name" value="Ribosomal_bL21"/>
</dbReference>
<dbReference type="NCBIfam" id="TIGR00061">
    <property type="entry name" value="L21"/>
    <property type="match status" value="1"/>
</dbReference>
<dbReference type="PANTHER" id="PTHR21349">
    <property type="entry name" value="50S RIBOSOMAL PROTEIN L21"/>
    <property type="match status" value="1"/>
</dbReference>
<dbReference type="PANTHER" id="PTHR21349:SF0">
    <property type="entry name" value="LARGE RIBOSOMAL SUBUNIT PROTEIN BL21M"/>
    <property type="match status" value="1"/>
</dbReference>
<dbReference type="Pfam" id="PF00829">
    <property type="entry name" value="Ribosomal_L21p"/>
    <property type="match status" value="1"/>
</dbReference>
<dbReference type="SUPFAM" id="SSF141091">
    <property type="entry name" value="L21p-like"/>
    <property type="match status" value="1"/>
</dbReference>
<reference key="1">
    <citation type="journal article" date="2004" name="Genome Res.">
        <title>The complete genome and proteome of Mycoplasma mobile.</title>
        <authorList>
            <person name="Jaffe J.D."/>
            <person name="Stange-Thomann N."/>
            <person name="Smith C."/>
            <person name="DeCaprio D."/>
            <person name="Fisher S."/>
            <person name="Butler J."/>
            <person name="Calvo S."/>
            <person name="Elkins T."/>
            <person name="FitzGerald M.G."/>
            <person name="Hafez N."/>
            <person name="Kodira C.D."/>
            <person name="Major J."/>
            <person name="Wang S."/>
            <person name="Wilkinson J."/>
            <person name="Nicol R."/>
            <person name="Nusbaum C."/>
            <person name="Birren B."/>
            <person name="Berg H.C."/>
            <person name="Church G.M."/>
        </authorList>
    </citation>
    <scope>NUCLEOTIDE SEQUENCE [LARGE SCALE GENOMIC DNA]</scope>
    <source>
        <strain>ATCC 43663 / NCTC 11711 / 163 K</strain>
    </source>
</reference>
<feature type="chain" id="PRO_0000270692" description="Large ribosomal subunit protein bL21">
    <location>
        <begin position="1"/>
        <end position="99"/>
    </location>
</feature>